<dbReference type="EC" id="1.1.1.267" evidence="1"/>
<dbReference type="EMBL" id="CP001080">
    <property type="protein sequence ID" value="ACD66120.1"/>
    <property type="molecule type" value="Genomic_DNA"/>
</dbReference>
<dbReference type="RefSeq" id="WP_012459201.1">
    <property type="nucleotide sequence ID" value="NC_010730.1"/>
</dbReference>
<dbReference type="SMR" id="B2V847"/>
<dbReference type="STRING" id="436114.SYO3AOP1_0479"/>
<dbReference type="KEGG" id="sul:SYO3AOP1_0479"/>
<dbReference type="eggNOG" id="COG0743">
    <property type="taxonomic scope" value="Bacteria"/>
</dbReference>
<dbReference type="HOGENOM" id="CLU_035714_4_0_0"/>
<dbReference type="UniPathway" id="UPA00056">
    <property type="reaction ID" value="UER00092"/>
</dbReference>
<dbReference type="GO" id="GO:0030604">
    <property type="term" value="F:1-deoxy-D-xylulose-5-phosphate reductoisomerase activity"/>
    <property type="evidence" value="ECO:0007669"/>
    <property type="project" value="UniProtKB-UniRule"/>
</dbReference>
<dbReference type="GO" id="GO:0030145">
    <property type="term" value="F:manganese ion binding"/>
    <property type="evidence" value="ECO:0007669"/>
    <property type="project" value="TreeGrafter"/>
</dbReference>
<dbReference type="GO" id="GO:0070402">
    <property type="term" value="F:NADPH binding"/>
    <property type="evidence" value="ECO:0007669"/>
    <property type="project" value="InterPro"/>
</dbReference>
<dbReference type="GO" id="GO:0051484">
    <property type="term" value="P:isopentenyl diphosphate biosynthetic process, methylerythritol 4-phosphate pathway involved in terpenoid biosynthetic process"/>
    <property type="evidence" value="ECO:0007669"/>
    <property type="project" value="TreeGrafter"/>
</dbReference>
<dbReference type="Gene3D" id="1.10.1740.10">
    <property type="match status" value="1"/>
</dbReference>
<dbReference type="Gene3D" id="3.40.50.720">
    <property type="entry name" value="NAD(P)-binding Rossmann-like Domain"/>
    <property type="match status" value="1"/>
</dbReference>
<dbReference type="HAMAP" id="MF_00183">
    <property type="entry name" value="DXP_reductoisom"/>
    <property type="match status" value="1"/>
</dbReference>
<dbReference type="InterPro" id="IPR003821">
    <property type="entry name" value="DXP_reductoisomerase"/>
</dbReference>
<dbReference type="InterPro" id="IPR013644">
    <property type="entry name" value="DXP_reductoisomerase_C"/>
</dbReference>
<dbReference type="InterPro" id="IPR013512">
    <property type="entry name" value="DXP_reductoisomerase_N"/>
</dbReference>
<dbReference type="InterPro" id="IPR026877">
    <property type="entry name" value="DXPR_C"/>
</dbReference>
<dbReference type="InterPro" id="IPR036169">
    <property type="entry name" value="DXPR_C_sf"/>
</dbReference>
<dbReference type="InterPro" id="IPR036291">
    <property type="entry name" value="NAD(P)-bd_dom_sf"/>
</dbReference>
<dbReference type="NCBIfam" id="TIGR00243">
    <property type="entry name" value="Dxr"/>
    <property type="match status" value="1"/>
</dbReference>
<dbReference type="PANTHER" id="PTHR30525">
    <property type="entry name" value="1-DEOXY-D-XYLULOSE 5-PHOSPHATE REDUCTOISOMERASE"/>
    <property type="match status" value="1"/>
</dbReference>
<dbReference type="PANTHER" id="PTHR30525:SF0">
    <property type="entry name" value="1-DEOXY-D-XYLULOSE 5-PHOSPHATE REDUCTOISOMERASE, CHLOROPLASTIC"/>
    <property type="match status" value="1"/>
</dbReference>
<dbReference type="Pfam" id="PF08436">
    <property type="entry name" value="DXP_redisom_C"/>
    <property type="match status" value="1"/>
</dbReference>
<dbReference type="Pfam" id="PF02670">
    <property type="entry name" value="DXP_reductoisom"/>
    <property type="match status" value="1"/>
</dbReference>
<dbReference type="Pfam" id="PF13288">
    <property type="entry name" value="DXPR_C"/>
    <property type="match status" value="1"/>
</dbReference>
<dbReference type="PIRSF" id="PIRSF006205">
    <property type="entry name" value="Dxp_reductismrs"/>
    <property type="match status" value="1"/>
</dbReference>
<dbReference type="SUPFAM" id="SSF69055">
    <property type="entry name" value="1-deoxy-D-xylulose-5-phosphate reductoisomerase, C-terminal domain"/>
    <property type="match status" value="1"/>
</dbReference>
<dbReference type="SUPFAM" id="SSF55347">
    <property type="entry name" value="Glyceraldehyde-3-phosphate dehydrogenase-like, C-terminal domain"/>
    <property type="match status" value="1"/>
</dbReference>
<dbReference type="SUPFAM" id="SSF51735">
    <property type="entry name" value="NAD(P)-binding Rossmann-fold domains"/>
    <property type="match status" value="1"/>
</dbReference>
<name>DXR_SULSY</name>
<organism>
    <name type="scientific">Sulfurihydrogenibium sp. (strain YO3AOP1)</name>
    <dbReference type="NCBI Taxonomy" id="436114"/>
    <lineage>
        <taxon>Bacteria</taxon>
        <taxon>Pseudomonadati</taxon>
        <taxon>Aquificota</taxon>
        <taxon>Aquificia</taxon>
        <taxon>Aquificales</taxon>
        <taxon>Hydrogenothermaceae</taxon>
        <taxon>Sulfurihydrogenibium</taxon>
    </lineage>
</organism>
<evidence type="ECO:0000255" key="1">
    <source>
        <dbReference type="HAMAP-Rule" id="MF_00183"/>
    </source>
</evidence>
<reference key="1">
    <citation type="journal article" date="2009" name="J. Bacteriol.">
        <title>Complete and draft genome sequences of six members of the Aquificales.</title>
        <authorList>
            <person name="Reysenbach A.-L."/>
            <person name="Hamamura N."/>
            <person name="Podar M."/>
            <person name="Griffiths E."/>
            <person name="Ferreira S."/>
            <person name="Hochstein R."/>
            <person name="Heidelberg J."/>
            <person name="Johnson J."/>
            <person name="Mead D."/>
            <person name="Pohorille A."/>
            <person name="Sarmiento M."/>
            <person name="Schweighofer K."/>
            <person name="Seshadri R."/>
            <person name="Voytek M.A."/>
        </authorList>
    </citation>
    <scope>NUCLEOTIDE SEQUENCE [LARGE SCALE GENOMIC DNA]</scope>
    <source>
        <strain>YO3AOP1</strain>
    </source>
</reference>
<gene>
    <name evidence="1" type="primary">dxr</name>
    <name type="ordered locus">SYO3AOP1_0479</name>
</gene>
<proteinExistence type="inferred from homology"/>
<comment type="function">
    <text evidence="1">Catalyzes the NADPH-dependent rearrangement and reduction of 1-deoxy-D-xylulose-5-phosphate (DXP) to 2-C-methyl-D-erythritol 4-phosphate (MEP).</text>
</comment>
<comment type="catalytic activity">
    <reaction evidence="1">
        <text>2-C-methyl-D-erythritol 4-phosphate + NADP(+) = 1-deoxy-D-xylulose 5-phosphate + NADPH + H(+)</text>
        <dbReference type="Rhea" id="RHEA:13717"/>
        <dbReference type="ChEBI" id="CHEBI:15378"/>
        <dbReference type="ChEBI" id="CHEBI:57783"/>
        <dbReference type="ChEBI" id="CHEBI:57792"/>
        <dbReference type="ChEBI" id="CHEBI:58262"/>
        <dbReference type="ChEBI" id="CHEBI:58349"/>
        <dbReference type="EC" id="1.1.1.267"/>
    </reaction>
    <physiologicalReaction direction="right-to-left" evidence="1">
        <dbReference type="Rhea" id="RHEA:13719"/>
    </physiologicalReaction>
</comment>
<comment type="cofactor">
    <cofactor evidence="1">
        <name>Mg(2+)</name>
        <dbReference type="ChEBI" id="CHEBI:18420"/>
    </cofactor>
    <cofactor evidence="1">
        <name>Mn(2+)</name>
        <dbReference type="ChEBI" id="CHEBI:29035"/>
    </cofactor>
</comment>
<comment type="pathway">
    <text evidence="1">Isoprenoid biosynthesis; isopentenyl diphosphate biosynthesis via DXP pathway; isopentenyl diphosphate from 1-deoxy-D-xylulose 5-phosphate: step 1/6.</text>
</comment>
<comment type="similarity">
    <text evidence="1">Belongs to the DXR family.</text>
</comment>
<protein>
    <recommendedName>
        <fullName evidence="1">1-deoxy-D-xylulose 5-phosphate reductoisomerase</fullName>
        <shortName evidence="1">DXP reductoisomerase</shortName>
        <ecNumber evidence="1">1.1.1.267</ecNumber>
    </recommendedName>
    <alternativeName>
        <fullName evidence="1">1-deoxyxylulose-5-phosphate reductoisomerase</fullName>
    </alternativeName>
    <alternativeName>
        <fullName evidence="1">2-C-methyl-D-erythritol 4-phosphate synthase</fullName>
    </alternativeName>
</protein>
<feature type="chain" id="PRO_1000098516" description="1-deoxy-D-xylulose 5-phosphate reductoisomerase">
    <location>
        <begin position="1"/>
        <end position="375"/>
    </location>
</feature>
<feature type="binding site" evidence="1">
    <location>
        <position position="10"/>
    </location>
    <ligand>
        <name>NADPH</name>
        <dbReference type="ChEBI" id="CHEBI:57783"/>
    </ligand>
</feature>
<feature type="binding site" evidence="1">
    <location>
        <position position="11"/>
    </location>
    <ligand>
        <name>NADPH</name>
        <dbReference type="ChEBI" id="CHEBI:57783"/>
    </ligand>
</feature>
<feature type="binding site" evidence="1">
    <location>
        <position position="12"/>
    </location>
    <ligand>
        <name>NADPH</name>
        <dbReference type="ChEBI" id="CHEBI:57783"/>
    </ligand>
</feature>
<feature type="binding site" evidence="1">
    <location>
        <position position="13"/>
    </location>
    <ligand>
        <name>NADPH</name>
        <dbReference type="ChEBI" id="CHEBI:57783"/>
    </ligand>
</feature>
<feature type="binding site" evidence="1">
    <location>
        <position position="37"/>
    </location>
    <ligand>
        <name>NADPH</name>
        <dbReference type="ChEBI" id="CHEBI:57783"/>
    </ligand>
</feature>
<feature type="binding site" evidence="1">
    <location>
        <position position="114"/>
    </location>
    <ligand>
        <name>NADPH</name>
        <dbReference type="ChEBI" id="CHEBI:57783"/>
    </ligand>
</feature>
<feature type="binding site" evidence="1">
    <location>
        <position position="115"/>
    </location>
    <ligand>
        <name>1-deoxy-D-xylulose 5-phosphate</name>
        <dbReference type="ChEBI" id="CHEBI:57792"/>
    </ligand>
</feature>
<feature type="binding site" evidence="1">
    <location>
        <position position="116"/>
    </location>
    <ligand>
        <name>NADPH</name>
        <dbReference type="ChEBI" id="CHEBI:57783"/>
    </ligand>
</feature>
<feature type="binding site" evidence="1">
    <location>
        <position position="136"/>
    </location>
    <ligand>
        <name>Mn(2+)</name>
        <dbReference type="ChEBI" id="CHEBI:29035"/>
    </ligand>
</feature>
<feature type="binding site" evidence="1">
    <location>
        <position position="137"/>
    </location>
    <ligand>
        <name>1-deoxy-D-xylulose 5-phosphate</name>
        <dbReference type="ChEBI" id="CHEBI:57792"/>
    </ligand>
</feature>
<feature type="binding site" evidence="1">
    <location>
        <position position="138"/>
    </location>
    <ligand>
        <name>1-deoxy-D-xylulose 5-phosphate</name>
        <dbReference type="ChEBI" id="CHEBI:57792"/>
    </ligand>
</feature>
<feature type="binding site" evidence="1">
    <location>
        <position position="138"/>
    </location>
    <ligand>
        <name>Mn(2+)</name>
        <dbReference type="ChEBI" id="CHEBI:29035"/>
    </ligand>
</feature>
<feature type="binding site" evidence="1">
    <location>
        <position position="162"/>
    </location>
    <ligand>
        <name>1-deoxy-D-xylulose 5-phosphate</name>
        <dbReference type="ChEBI" id="CHEBI:57792"/>
    </ligand>
</feature>
<feature type="binding site" evidence="1">
    <location>
        <position position="185"/>
    </location>
    <ligand>
        <name>1-deoxy-D-xylulose 5-phosphate</name>
        <dbReference type="ChEBI" id="CHEBI:57792"/>
    </ligand>
</feature>
<feature type="binding site" evidence="1">
    <location>
        <position position="191"/>
    </location>
    <ligand>
        <name>NADPH</name>
        <dbReference type="ChEBI" id="CHEBI:57783"/>
    </ligand>
</feature>
<feature type="binding site" evidence="1">
    <location>
        <position position="198"/>
    </location>
    <ligand>
        <name>1-deoxy-D-xylulose 5-phosphate</name>
        <dbReference type="ChEBI" id="CHEBI:57792"/>
    </ligand>
</feature>
<feature type="binding site" evidence="1">
    <location>
        <position position="203"/>
    </location>
    <ligand>
        <name>1-deoxy-D-xylulose 5-phosphate</name>
        <dbReference type="ChEBI" id="CHEBI:57792"/>
    </ligand>
</feature>
<feature type="binding site" evidence="1">
    <location>
        <position position="204"/>
    </location>
    <ligand>
        <name>1-deoxy-D-xylulose 5-phosphate</name>
        <dbReference type="ChEBI" id="CHEBI:57792"/>
    </ligand>
</feature>
<feature type="binding site" evidence="1">
    <location>
        <position position="207"/>
    </location>
    <ligand>
        <name>1-deoxy-D-xylulose 5-phosphate</name>
        <dbReference type="ChEBI" id="CHEBI:57792"/>
    </ligand>
</feature>
<feature type="binding site" evidence="1">
    <location>
        <position position="207"/>
    </location>
    <ligand>
        <name>Mn(2+)</name>
        <dbReference type="ChEBI" id="CHEBI:29035"/>
    </ligand>
</feature>
<accession>B2V847</accession>
<sequence length="375" mass="42325">MLKVGILGSTGSVGSQALDVIRKYKDQIKVELLGASKLSENLINQIKEFKPSYVYVENAEEKSIDDIKVLVGEDGLRRAVNLDLDLFINAIAGIKGILPTYLLLKYNKTLATANKEAIICLGELLKDKYKKILPIDSEHSAIFQILKDSNQKEVRRIILTASGGPFVNMPAEDFENITVKQALIHPRWSMGKKITIDSATLMNKGLEVIEAHYLFSMPYEKIDVLIHPESIIHGMVEFVDGTVISNMSNPDMKIPISYALFYPERKFLSDNYLDFTKIKSLNFLKPDTEKFPLLKLAVECGKKGGVYPTVLTVADEIAVNYFLEERIKFTDIHKIILETLEKFDYNKLDSVDDIFYIIDKTINLATEIAKKYGST</sequence>
<keyword id="KW-0414">Isoprene biosynthesis</keyword>
<keyword id="KW-0464">Manganese</keyword>
<keyword id="KW-0479">Metal-binding</keyword>
<keyword id="KW-0521">NADP</keyword>
<keyword id="KW-0560">Oxidoreductase</keyword>